<comment type="function">
    <text evidence="1">One of the primary rRNA binding proteins, it binds directly to 16S rRNA where it nucleates assembly of the head domain of the 30S subunit. Is located at the subunit interface close to the decoding center, probably blocks exit of the E-site tRNA.</text>
</comment>
<comment type="subunit">
    <text evidence="1">Part of the 30S ribosomal subunit. Contacts proteins S9 and S11.</text>
</comment>
<comment type="similarity">
    <text evidence="1">Belongs to the universal ribosomal protein uS7 family.</text>
</comment>
<gene>
    <name evidence="1" type="primary">rpsG</name>
    <name type="ordered locus">CLI_3667</name>
</gene>
<proteinExistence type="inferred from homology"/>
<sequence>MPRKGHIAKRDVLPDPLYNSKVVTKLINSIMLDGKRGVAQKICYDAFEIIAEKSGKDAMEVFETAMNNIMPLLEVKARRIGGATYQVPIEVRPERRQTLGIRWMLIAARKRGERSMRERLAGELLDASNNTGAAVKKREDTHKMAEANKAFAHYRY</sequence>
<evidence type="ECO:0000255" key="1">
    <source>
        <dbReference type="HAMAP-Rule" id="MF_00480"/>
    </source>
</evidence>
<evidence type="ECO:0000305" key="2"/>
<keyword id="KW-0687">Ribonucleoprotein</keyword>
<keyword id="KW-0689">Ribosomal protein</keyword>
<keyword id="KW-0694">RNA-binding</keyword>
<keyword id="KW-0699">rRNA-binding</keyword>
<keyword id="KW-0820">tRNA-binding</keyword>
<name>RS7_CLOBL</name>
<dbReference type="EMBL" id="CP000728">
    <property type="protein sequence ID" value="ABS42903.1"/>
    <property type="molecule type" value="Genomic_DNA"/>
</dbReference>
<dbReference type="RefSeq" id="WP_003357613.1">
    <property type="nucleotide sequence ID" value="NC_009699.1"/>
</dbReference>
<dbReference type="SMR" id="A7GJ78"/>
<dbReference type="GeneID" id="92940254"/>
<dbReference type="KEGG" id="cbf:CLI_3667"/>
<dbReference type="HOGENOM" id="CLU_072226_1_1_9"/>
<dbReference type="Proteomes" id="UP000002410">
    <property type="component" value="Chromosome"/>
</dbReference>
<dbReference type="GO" id="GO:0015935">
    <property type="term" value="C:small ribosomal subunit"/>
    <property type="evidence" value="ECO:0007669"/>
    <property type="project" value="InterPro"/>
</dbReference>
<dbReference type="GO" id="GO:0019843">
    <property type="term" value="F:rRNA binding"/>
    <property type="evidence" value="ECO:0007669"/>
    <property type="project" value="UniProtKB-UniRule"/>
</dbReference>
<dbReference type="GO" id="GO:0003735">
    <property type="term" value="F:structural constituent of ribosome"/>
    <property type="evidence" value="ECO:0007669"/>
    <property type="project" value="InterPro"/>
</dbReference>
<dbReference type="GO" id="GO:0000049">
    <property type="term" value="F:tRNA binding"/>
    <property type="evidence" value="ECO:0007669"/>
    <property type="project" value="UniProtKB-UniRule"/>
</dbReference>
<dbReference type="GO" id="GO:0006412">
    <property type="term" value="P:translation"/>
    <property type="evidence" value="ECO:0007669"/>
    <property type="project" value="UniProtKB-UniRule"/>
</dbReference>
<dbReference type="CDD" id="cd14869">
    <property type="entry name" value="uS7_Bacteria"/>
    <property type="match status" value="1"/>
</dbReference>
<dbReference type="FunFam" id="1.10.455.10:FF:000001">
    <property type="entry name" value="30S ribosomal protein S7"/>
    <property type="match status" value="1"/>
</dbReference>
<dbReference type="Gene3D" id="1.10.455.10">
    <property type="entry name" value="Ribosomal protein S7 domain"/>
    <property type="match status" value="1"/>
</dbReference>
<dbReference type="HAMAP" id="MF_00480_B">
    <property type="entry name" value="Ribosomal_uS7_B"/>
    <property type="match status" value="1"/>
</dbReference>
<dbReference type="InterPro" id="IPR000235">
    <property type="entry name" value="Ribosomal_uS7"/>
</dbReference>
<dbReference type="InterPro" id="IPR005717">
    <property type="entry name" value="Ribosomal_uS7_bac/org-type"/>
</dbReference>
<dbReference type="InterPro" id="IPR020606">
    <property type="entry name" value="Ribosomal_uS7_CS"/>
</dbReference>
<dbReference type="InterPro" id="IPR023798">
    <property type="entry name" value="Ribosomal_uS7_dom"/>
</dbReference>
<dbReference type="InterPro" id="IPR036823">
    <property type="entry name" value="Ribosomal_uS7_dom_sf"/>
</dbReference>
<dbReference type="NCBIfam" id="TIGR01029">
    <property type="entry name" value="rpsG_bact"/>
    <property type="match status" value="1"/>
</dbReference>
<dbReference type="PANTHER" id="PTHR11205">
    <property type="entry name" value="RIBOSOMAL PROTEIN S7"/>
    <property type="match status" value="1"/>
</dbReference>
<dbReference type="Pfam" id="PF00177">
    <property type="entry name" value="Ribosomal_S7"/>
    <property type="match status" value="1"/>
</dbReference>
<dbReference type="PIRSF" id="PIRSF002122">
    <property type="entry name" value="RPS7p_RPS7a_RPS5e_RPS7o"/>
    <property type="match status" value="1"/>
</dbReference>
<dbReference type="SUPFAM" id="SSF47973">
    <property type="entry name" value="Ribosomal protein S7"/>
    <property type="match status" value="1"/>
</dbReference>
<dbReference type="PROSITE" id="PS00052">
    <property type="entry name" value="RIBOSOMAL_S7"/>
    <property type="match status" value="1"/>
</dbReference>
<feature type="chain" id="PRO_1000014177" description="Small ribosomal subunit protein uS7">
    <location>
        <begin position="1"/>
        <end position="156"/>
    </location>
</feature>
<organism>
    <name type="scientific">Clostridium botulinum (strain Langeland / NCTC 10281 / Type F)</name>
    <dbReference type="NCBI Taxonomy" id="441772"/>
    <lineage>
        <taxon>Bacteria</taxon>
        <taxon>Bacillati</taxon>
        <taxon>Bacillota</taxon>
        <taxon>Clostridia</taxon>
        <taxon>Eubacteriales</taxon>
        <taxon>Clostridiaceae</taxon>
        <taxon>Clostridium</taxon>
    </lineage>
</organism>
<protein>
    <recommendedName>
        <fullName evidence="1">Small ribosomal subunit protein uS7</fullName>
    </recommendedName>
    <alternativeName>
        <fullName evidence="2">30S ribosomal protein S7</fullName>
    </alternativeName>
</protein>
<accession>A7GJ78</accession>
<reference key="1">
    <citation type="submission" date="2007-06" db="EMBL/GenBank/DDBJ databases">
        <authorList>
            <person name="Brinkac L.M."/>
            <person name="Daugherty S."/>
            <person name="Dodson R.J."/>
            <person name="Madupu R."/>
            <person name="Brown J.L."/>
            <person name="Bruce D."/>
            <person name="Detter C."/>
            <person name="Munk C."/>
            <person name="Smith L.A."/>
            <person name="Smith T.J."/>
            <person name="White O."/>
            <person name="Brettin T.S."/>
        </authorList>
    </citation>
    <scope>NUCLEOTIDE SEQUENCE [LARGE SCALE GENOMIC DNA]</scope>
    <source>
        <strain>Langeland / NCTC 10281 / Type F</strain>
    </source>
</reference>